<keyword id="KW-0024">Alternative initiation</keyword>
<proteinExistence type="predicted"/>
<name>HBEAG_HBVB8</name>
<sequence length="27" mass="2995">MQLFHLCLVISCSCPTVQASKLCLGWL</sequence>
<protein>
    <recommendedName>
        <fullName>Truncated HBeAg protein</fullName>
    </recommendedName>
</protein>
<accession>P0C6K6</accession>
<gene>
    <name type="primary">C</name>
</gene>
<organism>
    <name type="scientific">Hepatitis B virus genotype B1 (isolate Japan/Ry30/2002)</name>
    <name type="common">HBV-B</name>
    <dbReference type="NCBI Taxonomy" id="489465"/>
    <lineage>
        <taxon>Viruses</taxon>
        <taxon>Riboviria</taxon>
        <taxon>Pararnavirae</taxon>
        <taxon>Artverviricota</taxon>
        <taxon>Revtraviricetes</taxon>
        <taxon>Blubervirales</taxon>
        <taxon>Hepadnaviridae</taxon>
        <taxon>Orthohepadnavirus</taxon>
        <taxon>Hepatitis B virus</taxon>
    </lineage>
</organism>
<comment type="alternative products">
    <event type="alternative initiation"/>
    <isoform>
        <id>P0C6K6-1</id>
        <name>External core antigen</name>
        <sequence type="displayed"/>
    </isoform>
    <isoform>
        <id>P0C677-1</id>
        <name>Capsid protein</name>
        <sequence type="external"/>
    </isoform>
</comment>
<comment type="miscellaneous">
    <text>A genomic mutation in 1896 creates a stop codon at position 28 of HBeAg, without affecting capsid open reading frame. The HBeAg negative variants of HBV are associated with fulminant hepatitis, but can also be found in patients with persistent infection and chronic hepatitis.</text>
</comment>
<reference key="1">
    <citation type="journal article" date="2002" name="J. Virol.">
        <title>Hepatitis B virus of genotype B with or without recombination with genotype C over the precore region plus the core gene.</title>
        <authorList>
            <person name="Sugauchi F."/>
            <person name="Orito E."/>
            <person name="Ichida T."/>
            <person name="Kato H."/>
            <person name="Sakugawa H."/>
            <person name="Kakumu S."/>
            <person name="Ishida T."/>
            <person name="Chutaputti A."/>
            <person name="Lai C.L."/>
            <person name="Ueda R."/>
            <person name="Miyakawa Y."/>
            <person name="Mizokami M."/>
        </authorList>
    </citation>
    <scope>NUCLEOTIDE SEQUENCE [GENOMIC DNA]</scope>
</reference>
<feature type="chain" id="PRO_0000324711" description="Truncated HBeAg protein">
    <location>
        <begin position="1"/>
        <end position="27"/>
    </location>
</feature>
<organismHost>
    <name type="scientific">Homo sapiens</name>
    <name type="common">Human</name>
    <dbReference type="NCBI Taxonomy" id="9606"/>
</organismHost>
<organismHost>
    <name type="scientific">Pan troglodytes</name>
    <name type="common">Chimpanzee</name>
    <dbReference type="NCBI Taxonomy" id="9598"/>
</organismHost>
<dbReference type="EMBL" id="AB073854">
    <property type="status" value="NOT_ANNOTATED_CDS"/>
    <property type="molecule type" value="Genomic_DNA"/>
</dbReference>
<dbReference type="Proteomes" id="UP000007919">
    <property type="component" value="Genome"/>
</dbReference>
<dbReference type="GO" id="GO:0005198">
    <property type="term" value="F:structural molecule activity"/>
    <property type="evidence" value="ECO:0007669"/>
    <property type="project" value="InterPro"/>
</dbReference>
<dbReference type="InterPro" id="IPR013195">
    <property type="entry name" value="Hepatitis_B_virus_capsid_N"/>
</dbReference>
<dbReference type="Pfam" id="PF08290">
    <property type="entry name" value="Hep_core_N"/>
    <property type="match status" value="1"/>
</dbReference>